<protein>
    <recommendedName>
        <fullName evidence="1">Urease accessory protein UreG</fullName>
    </recommendedName>
</protein>
<accession>A3NCM0</accession>
<comment type="function">
    <text evidence="1">Facilitates the functional incorporation of the urease nickel metallocenter. This process requires GTP hydrolysis, probably effectuated by UreG.</text>
</comment>
<comment type="subunit">
    <text evidence="1">Homodimer. UreD, UreF and UreG form a complex that acts as a GTP-hydrolysis-dependent molecular chaperone, activating the urease apoprotein by helping to assemble the nickel containing metallocenter of UreC. The UreE protein probably delivers the nickel.</text>
</comment>
<comment type="subcellular location">
    <subcellularLocation>
        <location evidence="1">Cytoplasm</location>
    </subcellularLocation>
</comment>
<comment type="similarity">
    <text evidence="1">Belongs to the SIMIBI class G3E GTPase family. UreG subfamily.</text>
</comment>
<feature type="chain" id="PRO_0000347378" description="Urease accessory protein UreG">
    <location>
        <begin position="1"/>
        <end position="216"/>
    </location>
</feature>
<feature type="binding site" evidence="1">
    <location>
        <begin position="25"/>
        <end position="32"/>
    </location>
    <ligand>
        <name>GTP</name>
        <dbReference type="ChEBI" id="CHEBI:37565"/>
    </ligand>
</feature>
<evidence type="ECO:0000255" key="1">
    <source>
        <dbReference type="HAMAP-Rule" id="MF_01389"/>
    </source>
</evidence>
<reference key="1">
    <citation type="journal article" date="2010" name="Genome Biol. Evol.">
        <title>Continuing evolution of Burkholderia mallei through genome reduction and large-scale rearrangements.</title>
        <authorList>
            <person name="Losada L."/>
            <person name="Ronning C.M."/>
            <person name="DeShazer D."/>
            <person name="Woods D."/>
            <person name="Fedorova N."/>
            <person name="Kim H.S."/>
            <person name="Shabalina S.A."/>
            <person name="Pearson T.R."/>
            <person name="Brinkac L."/>
            <person name="Tan P."/>
            <person name="Nandi T."/>
            <person name="Crabtree J."/>
            <person name="Badger J."/>
            <person name="Beckstrom-Sternberg S."/>
            <person name="Saqib M."/>
            <person name="Schutzer S.E."/>
            <person name="Keim P."/>
            <person name="Nierman W.C."/>
        </authorList>
    </citation>
    <scope>NUCLEOTIDE SEQUENCE [LARGE SCALE GENOMIC DNA]</scope>
    <source>
        <strain>668</strain>
    </source>
</reference>
<keyword id="KW-0143">Chaperone</keyword>
<keyword id="KW-0963">Cytoplasm</keyword>
<keyword id="KW-0342">GTP-binding</keyword>
<keyword id="KW-0996">Nickel insertion</keyword>
<keyword id="KW-0547">Nucleotide-binding</keyword>
<dbReference type="EMBL" id="CP000570">
    <property type="protein sequence ID" value="ABN81733.1"/>
    <property type="molecule type" value="Genomic_DNA"/>
</dbReference>
<dbReference type="RefSeq" id="WP_004185810.1">
    <property type="nucleotide sequence ID" value="NC_009074.1"/>
</dbReference>
<dbReference type="SMR" id="A3NCM0"/>
<dbReference type="GeneID" id="92979890"/>
<dbReference type="KEGG" id="bpd:BURPS668_3079"/>
<dbReference type="HOGENOM" id="CLU_072144_1_0_4"/>
<dbReference type="GO" id="GO:0005737">
    <property type="term" value="C:cytoplasm"/>
    <property type="evidence" value="ECO:0007669"/>
    <property type="project" value="UniProtKB-SubCell"/>
</dbReference>
<dbReference type="GO" id="GO:0005525">
    <property type="term" value="F:GTP binding"/>
    <property type="evidence" value="ECO:0007669"/>
    <property type="project" value="UniProtKB-KW"/>
</dbReference>
<dbReference type="GO" id="GO:0003924">
    <property type="term" value="F:GTPase activity"/>
    <property type="evidence" value="ECO:0007669"/>
    <property type="project" value="InterPro"/>
</dbReference>
<dbReference type="GO" id="GO:0016151">
    <property type="term" value="F:nickel cation binding"/>
    <property type="evidence" value="ECO:0007669"/>
    <property type="project" value="UniProtKB-UniRule"/>
</dbReference>
<dbReference type="GO" id="GO:0043419">
    <property type="term" value="P:urea catabolic process"/>
    <property type="evidence" value="ECO:0007669"/>
    <property type="project" value="InterPro"/>
</dbReference>
<dbReference type="CDD" id="cd05540">
    <property type="entry name" value="UreG"/>
    <property type="match status" value="1"/>
</dbReference>
<dbReference type="FunFam" id="3.40.50.300:FF:000208">
    <property type="entry name" value="Urease accessory protein UreG"/>
    <property type="match status" value="1"/>
</dbReference>
<dbReference type="Gene3D" id="3.40.50.300">
    <property type="entry name" value="P-loop containing nucleotide triphosphate hydrolases"/>
    <property type="match status" value="1"/>
</dbReference>
<dbReference type="HAMAP" id="MF_01389">
    <property type="entry name" value="UreG"/>
    <property type="match status" value="1"/>
</dbReference>
<dbReference type="InterPro" id="IPR003495">
    <property type="entry name" value="CobW/HypB/UreG_nucleotide-bd"/>
</dbReference>
<dbReference type="InterPro" id="IPR027417">
    <property type="entry name" value="P-loop_NTPase"/>
</dbReference>
<dbReference type="InterPro" id="IPR004400">
    <property type="entry name" value="UreG"/>
</dbReference>
<dbReference type="NCBIfam" id="TIGR00101">
    <property type="entry name" value="ureG"/>
    <property type="match status" value="1"/>
</dbReference>
<dbReference type="PANTHER" id="PTHR31715">
    <property type="entry name" value="UREASE ACCESSORY PROTEIN G"/>
    <property type="match status" value="1"/>
</dbReference>
<dbReference type="PANTHER" id="PTHR31715:SF0">
    <property type="entry name" value="UREASE ACCESSORY PROTEIN G"/>
    <property type="match status" value="1"/>
</dbReference>
<dbReference type="Pfam" id="PF02492">
    <property type="entry name" value="cobW"/>
    <property type="match status" value="1"/>
</dbReference>
<dbReference type="PIRSF" id="PIRSF005624">
    <property type="entry name" value="Ni-bind_GTPase"/>
    <property type="match status" value="1"/>
</dbReference>
<dbReference type="SUPFAM" id="SSF52540">
    <property type="entry name" value="P-loop containing nucleoside triphosphate hydrolases"/>
    <property type="match status" value="1"/>
</dbReference>
<proteinExistence type="inferred from homology"/>
<organism>
    <name type="scientific">Burkholderia pseudomallei (strain 668)</name>
    <dbReference type="NCBI Taxonomy" id="320373"/>
    <lineage>
        <taxon>Bacteria</taxon>
        <taxon>Pseudomonadati</taxon>
        <taxon>Pseudomonadota</taxon>
        <taxon>Betaproteobacteria</taxon>
        <taxon>Burkholderiales</taxon>
        <taxon>Burkholderiaceae</taxon>
        <taxon>Burkholderia</taxon>
        <taxon>pseudomallei group</taxon>
    </lineage>
</organism>
<name>UREG_BURP6</name>
<sequence>MNAPRFAAPARRTKKLPPLRVGIGGPVGSGKTTLLEMLCKGMRERYDLVAITNDIYTKEDQRLLTIAGALPEARIMGVETGGCPHTAIREDASINLEAVERMLARFPDADIVFIESGGDNLAATFSPELSDLTIYVIDVAGGEKIPRKGGPGITKSDLLVINKTDLAPLVGANLEVMASDTRKMRGERPYVMCNLKALDGVADVIAFIENKGLLTV</sequence>
<gene>
    <name evidence="1" type="primary">ureG</name>
    <name type="ordered locus">BURPS668_3079</name>
</gene>